<proteinExistence type="inferred from homology"/>
<gene>
    <name evidence="1" type="primary">rutB</name>
    <name type="ordered locus">E2348C_1062</name>
</gene>
<accession>B7UNZ4</accession>
<feature type="chain" id="PRO_0000402669" description="Ureidoacrylate amidohydrolase RutB">
    <location>
        <begin position="1"/>
        <end position="230"/>
    </location>
</feature>
<feature type="active site" description="Proton acceptor" evidence="1">
    <location>
        <position position="24"/>
    </location>
</feature>
<feature type="active site" evidence="1">
    <location>
        <position position="133"/>
    </location>
</feature>
<feature type="active site" description="Nucleophile" evidence="1">
    <location>
        <position position="166"/>
    </location>
</feature>
<comment type="function">
    <text evidence="1">Hydrolyzes ureidoacrylate to form aminoacrylate and carbamate. The carbamate hydrolyzes spontaneously, thereby releasing one of the nitrogen atoms of the pyrimidine ring as ammonia and one of its carbon atoms as CO2.</text>
</comment>
<comment type="catalytic activity">
    <reaction evidence="1">
        <text>(Z)-3-ureidoacrylate + H2O + H(+) = (Z)-3-aminoacrylate + NH4(+) + CO2</text>
        <dbReference type="Rhea" id="RHEA:42624"/>
        <dbReference type="ChEBI" id="CHEBI:15377"/>
        <dbReference type="ChEBI" id="CHEBI:15378"/>
        <dbReference type="ChEBI" id="CHEBI:16526"/>
        <dbReference type="ChEBI" id="CHEBI:28938"/>
        <dbReference type="ChEBI" id="CHEBI:59891"/>
        <dbReference type="ChEBI" id="CHEBI:59894"/>
        <dbReference type="EC" id="3.5.1.110"/>
    </reaction>
</comment>
<comment type="catalytic activity">
    <reaction evidence="1">
        <text>(Z)-3-ureidoacrylate + H2O = (Z)-3-aminoacrylate + carbamate + H(+)</text>
        <dbReference type="Rhea" id="RHEA:31603"/>
        <dbReference type="ChEBI" id="CHEBI:13941"/>
        <dbReference type="ChEBI" id="CHEBI:15377"/>
        <dbReference type="ChEBI" id="CHEBI:15378"/>
        <dbReference type="ChEBI" id="CHEBI:59891"/>
        <dbReference type="ChEBI" id="CHEBI:59894"/>
    </reaction>
</comment>
<comment type="catalytic activity">
    <reaction evidence="1">
        <text>(Z)-2-methylureidoacrylate + H2O + H(+) = (Z)-2-methylaminoacrylate + NH4(+) + CO2</text>
        <dbReference type="Rhea" id="RHEA:42620"/>
        <dbReference type="ChEBI" id="CHEBI:15377"/>
        <dbReference type="ChEBI" id="CHEBI:15378"/>
        <dbReference type="ChEBI" id="CHEBI:16526"/>
        <dbReference type="ChEBI" id="CHEBI:28938"/>
        <dbReference type="ChEBI" id="CHEBI:143783"/>
        <dbReference type="ChEBI" id="CHEBI:145735"/>
        <dbReference type="EC" id="3.5.1.110"/>
    </reaction>
</comment>
<comment type="induction">
    <text evidence="1">Up-regulated by the nitrogen regulatory protein C (NtrC also called GlnG) and repressed by RutR.</text>
</comment>
<comment type="similarity">
    <text evidence="1">Belongs to the isochorismatase family. RutB subfamily.</text>
</comment>
<organism>
    <name type="scientific">Escherichia coli O127:H6 (strain E2348/69 / EPEC)</name>
    <dbReference type="NCBI Taxonomy" id="574521"/>
    <lineage>
        <taxon>Bacteria</taxon>
        <taxon>Pseudomonadati</taxon>
        <taxon>Pseudomonadota</taxon>
        <taxon>Gammaproteobacteria</taxon>
        <taxon>Enterobacterales</taxon>
        <taxon>Enterobacteriaceae</taxon>
        <taxon>Escherichia</taxon>
    </lineage>
</organism>
<protein>
    <recommendedName>
        <fullName evidence="1">Ureidoacrylate amidohydrolase RutB</fullName>
        <ecNumber evidence="1">3.5.1.110</ecNumber>
    </recommendedName>
</protein>
<evidence type="ECO:0000255" key="1">
    <source>
        <dbReference type="HAMAP-Rule" id="MF_00830"/>
    </source>
</evidence>
<sequence>MTTLTARPEAITFDPQQTALIVVDMQNAYATPGGYLDLAGFDVSTTRPVIANIQTAVTAARAAGMLIIWFQNGWDEQYVEAGGPGSPNYHKSNALKTMRNQPLLQGKLLTKGSWDYQLVDELMPQPGDIVLPKPRYSGFFNTPLDSILRSRGIRHLVFTGIATNVCVESTLRDGFFLEYFGVVLEDATHQAGPEFAQKAALFNIETFFGWVSDVETFCDALSSTSFARIA</sequence>
<dbReference type="EC" id="3.5.1.110" evidence="1"/>
<dbReference type="EMBL" id="FM180568">
    <property type="protein sequence ID" value="CAS08610.1"/>
    <property type="molecule type" value="Genomic_DNA"/>
</dbReference>
<dbReference type="RefSeq" id="WP_001340067.1">
    <property type="nucleotide sequence ID" value="NC_011601.1"/>
</dbReference>
<dbReference type="SMR" id="B7UNZ4"/>
<dbReference type="KEGG" id="ecg:E2348C_1062"/>
<dbReference type="HOGENOM" id="CLU_068979_8_0_6"/>
<dbReference type="Proteomes" id="UP000008205">
    <property type="component" value="Chromosome"/>
</dbReference>
<dbReference type="GO" id="GO:0016811">
    <property type="term" value="F:hydrolase activity, acting on carbon-nitrogen (but not peptide) bonds, in linear amides"/>
    <property type="evidence" value="ECO:0007669"/>
    <property type="project" value="UniProtKB-UniRule"/>
</dbReference>
<dbReference type="GO" id="GO:0019740">
    <property type="term" value="P:nitrogen utilization"/>
    <property type="evidence" value="ECO:0007669"/>
    <property type="project" value="UniProtKB-UniRule"/>
</dbReference>
<dbReference type="GO" id="GO:0006212">
    <property type="term" value="P:uracil catabolic process"/>
    <property type="evidence" value="ECO:0007669"/>
    <property type="project" value="UniProtKB-UniRule"/>
</dbReference>
<dbReference type="CDD" id="cd00431">
    <property type="entry name" value="cysteine_hydrolases"/>
    <property type="match status" value="1"/>
</dbReference>
<dbReference type="Gene3D" id="3.40.50.850">
    <property type="entry name" value="Isochorismatase-like"/>
    <property type="match status" value="1"/>
</dbReference>
<dbReference type="HAMAP" id="MF_00830">
    <property type="entry name" value="RutB"/>
    <property type="match status" value="1"/>
</dbReference>
<dbReference type="InterPro" id="IPR000868">
    <property type="entry name" value="Isochorismatase-like_dom"/>
</dbReference>
<dbReference type="InterPro" id="IPR050272">
    <property type="entry name" value="Isochorismatase-like_hydrls"/>
</dbReference>
<dbReference type="InterPro" id="IPR036380">
    <property type="entry name" value="Isochorismatase-like_sf"/>
</dbReference>
<dbReference type="InterPro" id="IPR019916">
    <property type="entry name" value="RutB"/>
</dbReference>
<dbReference type="NCBIfam" id="TIGR03614">
    <property type="entry name" value="RutB"/>
    <property type="match status" value="1"/>
</dbReference>
<dbReference type="PANTHER" id="PTHR43540:SF6">
    <property type="entry name" value="ISOCHORISMATASE-LIKE DOMAIN-CONTAINING PROTEIN"/>
    <property type="match status" value="1"/>
</dbReference>
<dbReference type="PANTHER" id="PTHR43540">
    <property type="entry name" value="PEROXYUREIDOACRYLATE/UREIDOACRYLATE AMIDOHYDROLASE-RELATED"/>
    <property type="match status" value="1"/>
</dbReference>
<dbReference type="Pfam" id="PF00857">
    <property type="entry name" value="Isochorismatase"/>
    <property type="match status" value="1"/>
</dbReference>
<dbReference type="SUPFAM" id="SSF52499">
    <property type="entry name" value="Isochorismatase-like hydrolases"/>
    <property type="match status" value="1"/>
</dbReference>
<name>RUTB_ECO27</name>
<keyword id="KW-0378">Hydrolase</keyword>
<keyword id="KW-1185">Reference proteome</keyword>
<reference key="1">
    <citation type="journal article" date="2009" name="J. Bacteriol.">
        <title>Complete genome sequence and comparative genome analysis of enteropathogenic Escherichia coli O127:H6 strain E2348/69.</title>
        <authorList>
            <person name="Iguchi A."/>
            <person name="Thomson N.R."/>
            <person name="Ogura Y."/>
            <person name="Saunders D."/>
            <person name="Ooka T."/>
            <person name="Henderson I.R."/>
            <person name="Harris D."/>
            <person name="Asadulghani M."/>
            <person name="Kurokawa K."/>
            <person name="Dean P."/>
            <person name="Kenny B."/>
            <person name="Quail M.A."/>
            <person name="Thurston S."/>
            <person name="Dougan G."/>
            <person name="Hayashi T."/>
            <person name="Parkhill J."/>
            <person name="Frankel G."/>
        </authorList>
    </citation>
    <scope>NUCLEOTIDE SEQUENCE [LARGE SCALE GENOMIC DNA]</scope>
    <source>
        <strain>E2348/69 / EPEC</strain>
    </source>
</reference>